<feature type="signal peptide" evidence="1">
    <location>
        <begin position="1"/>
        <end position="24"/>
    </location>
</feature>
<feature type="chain" id="PRO_0000015005" description="V-set and immunoglobulin domain-containing protein 2">
    <location>
        <begin position="25"/>
        <end position="328"/>
    </location>
</feature>
<feature type="topological domain" description="Extracellular" evidence="2">
    <location>
        <begin position="25"/>
        <end position="244"/>
    </location>
</feature>
<feature type="transmembrane region" description="Helical" evidence="2">
    <location>
        <begin position="245"/>
        <end position="265"/>
    </location>
</feature>
<feature type="topological domain" description="Cytoplasmic" evidence="2">
    <location>
        <begin position="266"/>
        <end position="328"/>
    </location>
</feature>
<feature type="domain" description="Ig-like V-type">
    <location>
        <begin position="25"/>
        <end position="138"/>
    </location>
</feature>
<feature type="domain" description="Ig-like C2-type">
    <location>
        <begin position="145"/>
        <end position="234"/>
    </location>
</feature>
<feature type="glycosylation site" description="N-linked (GlcNAc...) asparagine" evidence="2">
    <location>
        <position position="139"/>
    </location>
</feature>
<feature type="glycosylation site" description="N-linked (GlcNAc...) asparagine" evidence="2">
    <location>
        <position position="207"/>
    </location>
</feature>
<feature type="glycosylation site" description="N-linked (GlcNAc...) asparagine" evidence="2">
    <location>
        <position position="232"/>
    </location>
</feature>
<feature type="disulfide bond" evidence="3">
    <location>
        <begin position="46"/>
        <end position="122"/>
    </location>
</feature>
<feature type="disulfide bond" evidence="3">
    <location>
        <begin position="167"/>
        <end position="218"/>
    </location>
</feature>
<feature type="splice variant" id="VSP_014120" description="In isoform 2." evidence="5">
    <location>
        <begin position="22"/>
        <end position="101"/>
    </location>
</feature>
<feature type="sequence conflict" description="In Ref. 1; AAD17524." evidence="6" ref="1">
    <original>S</original>
    <variation>L</variation>
    <location>
        <position position="158"/>
    </location>
</feature>
<feature type="sequence conflict" description="In Ref. 1; AAD17524." evidence="6" ref="1">
    <original>G</original>
    <variation>C</variation>
    <location>
        <position position="184"/>
    </location>
</feature>
<feature type="sequence conflict" description="In Ref. 1; AAD17524." evidence="6" ref="1">
    <original>N</original>
    <variation>H</variation>
    <location>
        <position position="222"/>
    </location>
</feature>
<feature type="sequence conflict" description="In Ref. 1; AAD17524." evidence="6" ref="1">
    <original>E</original>
    <variation>D</variation>
    <location>
        <position position="240"/>
    </location>
</feature>
<feature type="sequence conflict" description="In Ref. 1." evidence="6" ref="1">
    <original>KERKKE</original>
    <variation>TEGTGA</variation>
    <location>
        <begin position="269"/>
        <end position="274"/>
    </location>
</feature>
<feature type="sequence conflict" description="In Ref. 1; BAB23323." evidence="6" ref="1">
    <original>K</original>
    <variation>R</variation>
    <location>
        <position position="276"/>
    </location>
</feature>
<feature type="sequence conflict" description="In Ref. 1; AAD17524." evidence="6" ref="1">
    <original>Q</original>
    <variation>P</variation>
    <location>
        <position position="296"/>
    </location>
</feature>
<feature type="sequence conflict" description="In Ref. 1; AAD17524." evidence="6" ref="1">
    <original>T</original>
    <variation>A</variation>
    <location>
        <position position="316"/>
    </location>
</feature>
<feature type="sequence conflict" description="In Ref. 1; AAD17524." evidence="6" ref="1">
    <original>T</original>
    <variation>P</variation>
    <location>
        <position position="319"/>
    </location>
</feature>
<dbReference type="EMBL" id="AF061024">
    <property type="protein sequence ID" value="AAD17524.1"/>
    <property type="molecule type" value="Genomic_DNA"/>
</dbReference>
<dbReference type="EMBL" id="AK004478">
    <property type="protein sequence ID" value="BAB23323.1"/>
    <property type="molecule type" value="mRNA"/>
</dbReference>
<dbReference type="EMBL" id="AK008920">
    <property type="protein sequence ID" value="BAB25968.1"/>
    <property type="molecule type" value="mRNA"/>
</dbReference>
<dbReference type="CCDS" id="CCDS22980.1">
    <molecule id="Q9Z109-1"/>
</dbReference>
<dbReference type="RefSeq" id="NP_065264.2">
    <molecule id="Q9Z109-1"/>
    <property type="nucleotide sequence ID" value="NM_020518.2"/>
</dbReference>
<dbReference type="SMR" id="Q9Z109"/>
<dbReference type="FunCoup" id="Q9Z109">
    <property type="interactions" value="589"/>
</dbReference>
<dbReference type="STRING" id="10090.ENSMUSP00000002008"/>
<dbReference type="GlyCosmos" id="Q9Z109">
    <property type="glycosylation" value="3 sites, No reported glycans"/>
</dbReference>
<dbReference type="GlyGen" id="Q9Z109">
    <property type="glycosylation" value="4 sites"/>
</dbReference>
<dbReference type="PhosphoSitePlus" id="Q9Z109"/>
<dbReference type="PaxDb" id="10090-ENSMUSP00000002008"/>
<dbReference type="ProteomicsDB" id="275192">
    <molecule id="Q9Z109-1"/>
</dbReference>
<dbReference type="ProteomicsDB" id="275193">
    <molecule id="Q9Z109-2"/>
</dbReference>
<dbReference type="Antibodypedia" id="32904">
    <property type="antibodies" value="244 antibodies from 24 providers"/>
</dbReference>
<dbReference type="DNASU" id="57276"/>
<dbReference type="Ensembl" id="ENSMUST00000002008.7">
    <molecule id="Q9Z109-1"/>
    <property type="protein sequence ID" value="ENSMUSP00000002008.6"/>
    <property type="gene ID" value="ENSMUSG00000001943.9"/>
</dbReference>
<dbReference type="Ensembl" id="ENSMUST00000215271.2">
    <molecule id="Q9Z109-2"/>
    <property type="protein sequence ID" value="ENSMUSP00000150115.2"/>
    <property type="gene ID" value="ENSMUSG00000001943.9"/>
</dbReference>
<dbReference type="GeneID" id="57276"/>
<dbReference type="KEGG" id="mmu:57276"/>
<dbReference type="UCSC" id="uc009ovb.1">
    <molecule id="Q9Z109-1"/>
    <property type="organism name" value="mouse"/>
</dbReference>
<dbReference type="UCSC" id="uc012gra.1">
    <molecule id="Q9Z109-2"/>
    <property type="organism name" value="mouse"/>
</dbReference>
<dbReference type="AGR" id="MGI:1928009"/>
<dbReference type="CTD" id="23584"/>
<dbReference type="MGI" id="MGI:1928009">
    <property type="gene designation" value="Vsig2"/>
</dbReference>
<dbReference type="VEuPathDB" id="HostDB:ENSMUSG00000001943"/>
<dbReference type="eggNOG" id="ENOG502RYI3">
    <property type="taxonomic scope" value="Eukaryota"/>
</dbReference>
<dbReference type="GeneTree" id="ENSGT00940000161544"/>
<dbReference type="HOGENOM" id="CLU_040549_1_0_1"/>
<dbReference type="InParanoid" id="Q9Z109"/>
<dbReference type="OMA" id="CLIKFQK"/>
<dbReference type="OrthoDB" id="190835at2759"/>
<dbReference type="PhylomeDB" id="Q9Z109"/>
<dbReference type="TreeFam" id="TF330875"/>
<dbReference type="BioGRID-ORCS" id="57276">
    <property type="hits" value="2 hits in 76 CRISPR screens"/>
</dbReference>
<dbReference type="PRO" id="PR:Q9Z109"/>
<dbReference type="Proteomes" id="UP000000589">
    <property type="component" value="Chromosome 9"/>
</dbReference>
<dbReference type="RNAct" id="Q9Z109">
    <property type="molecule type" value="protein"/>
</dbReference>
<dbReference type="Bgee" id="ENSMUSG00000001943">
    <property type="expression patterns" value="Expressed in pyloric antrum and 73 other cell types or tissues"/>
</dbReference>
<dbReference type="ExpressionAtlas" id="Q9Z109">
    <property type="expression patterns" value="baseline and differential"/>
</dbReference>
<dbReference type="GO" id="GO:0005886">
    <property type="term" value="C:plasma membrane"/>
    <property type="evidence" value="ECO:0000247"/>
    <property type="project" value="MGI"/>
</dbReference>
<dbReference type="FunFam" id="2.60.40.10:FF:000095">
    <property type="entry name" value="immunoglobulin superfamily member 11 isoform X1"/>
    <property type="match status" value="1"/>
</dbReference>
<dbReference type="FunFam" id="2.60.40.10:FF:001280">
    <property type="entry name" value="V-set and immunoglobulin domain containing 2 (Predicted)"/>
    <property type="match status" value="1"/>
</dbReference>
<dbReference type="Gene3D" id="2.60.40.10">
    <property type="entry name" value="Immunoglobulins"/>
    <property type="match status" value="2"/>
</dbReference>
<dbReference type="InterPro" id="IPR007110">
    <property type="entry name" value="Ig-like_dom"/>
</dbReference>
<dbReference type="InterPro" id="IPR036179">
    <property type="entry name" value="Ig-like_dom_sf"/>
</dbReference>
<dbReference type="InterPro" id="IPR013783">
    <property type="entry name" value="Ig-like_fold"/>
</dbReference>
<dbReference type="InterPro" id="IPR003599">
    <property type="entry name" value="Ig_sub"/>
</dbReference>
<dbReference type="InterPro" id="IPR003598">
    <property type="entry name" value="Ig_sub2"/>
</dbReference>
<dbReference type="InterPro" id="IPR013106">
    <property type="entry name" value="Ig_V-set"/>
</dbReference>
<dbReference type="InterPro" id="IPR042475">
    <property type="entry name" value="VSIG2"/>
</dbReference>
<dbReference type="PANTHER" id="PTHR45046">
    <property type="entry name" value="V-SET AND IMMUNOGLOBULIN DOMAIN-CONTAINING PROTEIN 2"/>
    <property type="match status" value="1"/>
</dbReference>
<dbReference type="PANTHER" id="PTHR45046:SF1">
    <property type="entry name" value="V-SET AND IMMUNOGLOBULIN DOMAIN-CONTAINING PROTEIN 2"/>
    <property type="match status" value="1"/>
</dbReference>
<dbReference type="Pfam" id="PF13927">
    <property type="entry name" value="Ig_3"/>
    <property type="match status" value="1"/>
</dbReference>
<dbReference type="Pfam" id="PF07686">
    <property type="entry name" value="V-set"/>
    <property type="match status" value="1"/>
</dbReference>
<dbReference type="SMART" id="SM00409">
    <property type="entry name" value="IG"/>
    <property type="match status" value="2"/>
</dbReference>
<dbReference type="SMART" id="SM00408">
    <property type="entry name" value="IGc2"/>
    <property type="match status" value="2"/>
</dbReference>
<dbReference type="SMART" id="SM00406">
    <property type="entry name" value="IGv"/>
    <property type="match status" value="1"/>
</dbReference>
<dbReference type="SUPFAM" id="SSF48726">
    <property type="entry name" value="Immunoglobulin"/>
    <property type="match status" value="2"/>
</dbReference>
<dbReference type="PROSITE" id="PS50835">
    <property type="entry name" value="IG_LIKE"/>
    <property type="match status" value="2"/>
</dbReference>
<comment type="subcellular location">
    <subcellularLocation>
        <location evidence="6">Membrane</location>
        <topology evidence="6">Single-pass type I membrane protein</topology>
    </subcellularLocation>
</comment>
<comment type="alternative products">
    <event type="alternative splicing"/>
    <isoform>
        <id>Q9Z109-1</id>
        <name>1</name>
        <sequence type="displayed"/>
    </isoform>
    <isoform>
        <id>Q9Z109-2</id>
        <name>2</name>
        <sequence type="described" ref="VSP_014120"/>
    </isoform>
</comment>
<comment type="tissue specificity">
    <text evidence="4">Expressed in the stomach, colon and prostate.</text>
</comment>
<evidence type="ECO:0000250" key="1"/>
<evidence type="ECO:0000255" key="2"/>
<evidence type="ECO:0000255" key="3">
    <source>
        <dbReference type="PROSITE-ProRule" id="PRU00114"/>
    </source>
</evidence>
<evidence type="ECO:0000269" key="4">
    <source>
    </source>
</evidence>
<evidence type="ECO:0000303" key="5">
    <source>
    </source>
</evidence>
<evidence type="ECO:0000305" key="6"/>
<keyword id="KW-0025">Alternative splicing</keyword>
<keyword id="KW-1015">Disulfide bond</keyword>
<keyword id="KW-0325">Glycoprotein</keyword>
<keyword id="KW-0393">Immunoglobulin domain</keyword>
<keyword id="KW-0472">Membrane</keyword>
<keyword id="KW-1185">Reference proteome</keyword>
<keyword id="KW-0677">Repeat</keyword>
<keyword id="KW-0732">Signal</keyword>
<keyword id="KW-0812">Transmembrane</keyword>
<keyword id="KW-1133">Transmembrane helix</keyword>
<protein>
    <recommendedName>
        <fullName>V-set and immunoglobulin domain-containing protein 2</fullName>
    </recommendedName>
    <alternativeName>
        <fullName>Cortical thymocyte-like protein</fullName>
        <shortName>CT-like protein</shortName>
    </alternativeName>
</protein>
<accession>Q9Z109</accession>
<accession>Q9CVA4</accession>
<accession>Q9D0T4</accession>
<reference key="1">
    <citation type="journal article" date="1998" name="Eur. J. Immunol.">
        <title>CTX, a Xenopus thymocyte receptor, defines a molecular family conserved throughout vertebrates.</title>
        <authorList>
            <person name="Chretien I."/>
            <person name="Marcuz A."/>
            <person name="Courtet M."/>
            <person name="Katevuo K."/>
            <person name="Vainio O."/>
            <person name="Heath J.K."/>
            <person name="White S.J."/>
            <person name="Du Pasquier L."/>
        </authorList>
    </citation>
    <scope>NUCLEOTIDE SEQUENCE [GENOMIC DNA]</scope>
    <scope>TISSUE SPECIFICITY</scope>
</reference>
<reference key="2">
    <citation type="journal article" date="2005" name="Science">
        <title>The transcriptional landscape of the mammalian genome.</title>
        <authorList>
            <person name="Carninci P."/>
            <person name="Kasukawa T."/>
            <person name="Katayama S."/>
            <person name="Gough J."/>
            <person name="Frith M.C."/>
            <person name="Maeda N."/>
            <person name="Oyama R."/>
            <person name="Ravasi T."/>
            <person name="Lenhard B."/>
            <person name="Wells C."/>
            <person name="Kodzius R."/>
            <person name="Shimokawa K."/>
            <person name="Bajic V.B."/>
            <person name="Brenner S.E."/>
            <person name="Batalov S."/>
            <person name="Forrest A.R."/>
            <person name="Zavolan M."/>
            <person name="Davis M.J."/>
            <person name="Wilming L.G."/>
            <person name="Aidinis V."/>
            <person name="Allen J.E."/>
            <person name="Ambesi-Impiombato A."/>
            <person name="Apweiler R."/>
            <person name="Aturaliya R.N."/>
            <person name="Bailey T.L."/>
            <person name="Bansal M."/>
            <person name="Baxter L."/>
            <person name="Beisel K.W."/>
            <person name="Bersano T."/>
            <person name="Bono H."/>
            <person name="Chalk A.M."/>
            <person name="Chiu K.P."/>
            <person name="Choudhary V."/>
            <person name="Christoffels A."/>
            <person name="Clutterbuck D.R."/>
            <person name="Crowe M.L."/>
            <person name="Dalla E."/>
            <person name="Dalrymple B.P."/>
            <person name="de Bono B."/>
            <person name="Della Gatta G."/>
            <person name="di Bernardo D."/>
            <person name="Down T."/>
            <person name="Engstrom P."/>
            <person name="Fagiolini M."/>
            <person name="Faulkner G."/>
            <person name="Fletcher C.F."/>
            <person name="Fukushima T."/>
            <person name="Furuno M."/>
            <person name="Futaki S."/>
            <person name="Gariboldi M."/>
            <person name="Georgii-Hemming P."/>
            <person name="Gingeras T.R."/>
            <person name="Gojobori T."/>
            <person name="Green R.E."/>
            <person name="Gustincich S."/>
            <person name="Harbers M."/>
            <person name="Hayashi Y."/>
            <person name="Hensch T.K."/>
            <person name="Hirokawa N."/>
            <person name="Hill D."/>
            <person name="Huminiecki L."/>
            <person name="Iacono M."/>
            <person name="Ikeo K."/>
            <person name="Iwama A."/>
            <person name="Ishikawa T."/>
            <person name="Jakt M."/>
            <person name="Kanapin A."/>
            <person name="Katoh M."/>
            <person name="Kawasawa Y."/>
            <person name="Kelso J."/>
            <person name="Kitamura H."/>
            <person name="Kitano H."/>
            <person name="Kollias G."/>
            <person name="Krishnan S.P."/>
            <person name="Kruger A."/>
            <person name="Kummerfeld S.K."/>
            <person name="Kurochkin I.V."/>
            <person name="Lareau L.F."/>
            <person name="Lazarevic D."/>
            <person name="Lipovich L."/>
            <person name="Liu J."/>
            <person name="Liuni S."/>
            <person name="McWilliam S."/>
            <person name="Madan Babu M."/>
            <person name="Madera M."/>
            <person name="Marchionni L."/>
            <person name="Matsuda H."/>
            <person name="Matsuzawa S."/>
            <person name="Miki H."/>
            <person name="Mignone F."/>
            <person name="Miyake S."/>
            <person name="Morris K."/>
            <person name="Mottagui-Tabar S."/>
            <person name="Mulder N."/>
            <person name="Nakano N."/>
            <person name="Nakauchi H."/>
            <person name="Ng P."/>
            <person name="Nilsson R."/>
            <person name="Nishiguchi S."/>
            <person name="Nishikawa S."/>
            <person name="Nori F."/>
            <person name="Ohara O."/>
            <person name="Okazaki Y."/>
            <person name="Orlando V."/>
            <person name="Pang K.C."/>
            <person name="Pavan W.J."/>
            <person name="Pavesi G."/>
            <person name="Pesole G."/>
            <person name="Petrovsky N."/>
            <person name="Piazza S."/>
            <person name="Reed J."/>
            <person name="Reid J.F."/>
            <person name="Ring B.Z."/>
            <person name="Ringwald M."/>
            <person name="Rost B."/>
            <person name="Ruan Y."/>
            <person name="Salzberg S.L."/>
            <person name="Sandelin A."/>
            <person name="Schneider C."/>
            <person name="Schoenbach C."/>
            <person name="Sekiguchi K."/>
            <person name="Semple C.A."/>
            <person name="Seno S."/>
            <person name="Sessa L."/>
            <person name="Sheng Y."/>
            <person name="Shibata Y."/>
            <person name="Shimada H."/>
            <person name="Shimada K."/>
            <person name="Silva D."/>
            <person name="Sinclair B."/>
            <person name="Sperling S."/>
            <person name="Stupka E."/>
            <person name="Sugiura K."/>
            <person name="Sultana R."/>
            <person name="Takenaka Y."/>
            <person name="Taki K."/>
            <person name="Tammoja K."/>
            <person name="Tan S.L."/>
            <person name="Tang S."/>
            <person name="Taylor M.S."/>
            <person name="Tegner J."/>
            <person name="Teichmann S.A."/>
            <person name="Ueda H.R."/>
            <person name="van Nimwegen E."/>
            <person name="Verardo R."/>
            <person name="Wei C.L."/>
            <person name="Yagi K."/>
            <person name="Yamanishi H."/>
            <person name="Zabarovsky E."/>
            <person name="Zhu S."/>
            <person name="Zimmer A."/>
            <person name="Hide W."/>
            <person name="Bult C."/>
            <person name="Grimmond S.M."/>
            <person name="Teasdale R.D."/>
            <person name="Liu E.T."/>
            <person name="Brusic V."/>
            <person name="Quackenbush J."/>
            <person name="Wahlestedt C."/>
            <person name="Mattick J.S."/>
            <person name="Hume D.A."/>
            <person name="Kai C."/>
            <person name="Sasaki D."/>
            <person name="Tomaru Y."/>
            <person name="Fukuda S."/>
            <person name="Kanamori-Katayama M."/>
            <person name="Suzuki M."/>
            <person name="Aoki J."/>
            <person name="Arakawa T."/>
            <person name="Iida J."/>
            <person name="Imamura K."/>
            <person name="Itoh M."/>
            <person name="Kato T."/>
            <person name="Kawaji H."/>
            <person name="Kawagashira N."/>
            <person name="Kawashima T."/>
            <person name="Kojima M."/>
            <person name="Kondo S."/>
            <person name="Konno H."/>
            <person name="Nakano K."/>
            <person name="Ninomiya N."/>
            <person name="Nishio T."/>
            <person name="Okada M."/>
            <person name="Plessy C."/>
            <person name="Shibata K."/>
            <person name="Shiraki T."/>
            <person name="Suzuki S."/>
            <person name="Tagami M."/>
            <person name="Waki K."/>
            <person name="Watahiki A."/>
            <person name="Okamura-Oho Y."/>
            <person name="Suzuki H."/>
            <person name="Kawai J."/>
            <person name="Hayashizaki Y."/>
        </authorList>
    </citation>
    <scope>NUCLEOTIDE SEQUENCE [LARGE SCALE MRNA] (ISOFORM 2)</scope>
    <scope>NUCLEOTIDE SEQUENCE [LARGE SCALE MRNA] OF 1-304 (ISOFORM 1)</scope>
    <source>
        <strain>C57BL/6J</strain>
        <tissue>Embryo</tissue>
        <tissue>Stomach</tissue>
    </source>
</reference>
<sequence>MAWPLVGAFLCGHLLGFVCLSGLAVEVTVPTEPLSVPKGKTAELSCSYKTSVGDNFALEWSFVQPGKPISASVPVLYFTNGHLYPTGSKADRAILLHDPPTGGLATLKLTDLRPSDTGTYLCNVNNPPDFYTNGLGLINLTVLVPPSHPLCSQSGQTSVGGSAALGCRSSEGAPKPVYNWERLGSSPTPPPGSMVQDEVSGQLILTNLSLTSSGTYRCVASNQMGSASCELNLSVTDSSEGRVAGTLIGVLLGVLLLSVAAFCLIRFQKERKKEPKETYGGSDLREDATAPGVFEQASMRADHSKELLEKSPCASTMTTTKSKLSMVV</sequence>
<organism>
    <name type="scientific">Mus musculus</name>
    <name type="common">Mouse</name>
    <dbReference type="NCBI Taxonomy" id="10090"/>
    <lineage>
        <taxon>Eukaryota</taxon>
        <taxon>Metazoa</taxon>
        <taxon>Chordata</taxon>
        <taxon>Craniata</taxon>
        <taxon>Vertebrata</taxon>
        <taxon>Euteleostomi</taxon>
        <taxon>Mammalia</taxon>
        <taxon>Eutheria</taxon>
        <taxon>Euarchontoglires</taxon>
        <taxon>Glires</taxon>
        <taxon>Rodentia</taxon>
        <taxon>Myomorpha</taxon>
        <taxon>Muroidea</taxon>
        <taxon>Muridae</taxon>
        <taxon>Murinae</taxon>
        <taxon>Mus</taxon>
        <taxon>Mus</taxon>
    </lineage>
</organism>
<gene>
    <name type="primary">Vsig2</name>
    <name type="synonym">Ctm</name>
    <name type="synonym">Ctxl</name>
</gene>
<name>VSIG2_MOUSE</name>
<proteinExistence type="evidence at transcript level"/>